<organism>
    <name type="scientific">Saccharomyces cerevisiae (strain Lalvin QA23)</name>
    <name type="common">Baker's yeast</name>
    <dbReference type="NCBI Taxonomy" id="764098"/>
    <lineage>
        <taxon>Eukaryota</taxon>
        <taxon>Fungi</taxon>
        <taxon>Dikarya</taxon>
        <taxon>Ascomycota</taxon>
        <taxon>Saccharomycotina</taxon>
        <taxon>Saccharomycetes</taxon>
        <taxon>Saccharomycetales</taxon>
        <taxon>Saccharomycetaceae</taxon>
        <taxon>Saccharomyces</taxon>
    </lineage>
</organism>
<feature type="chain" id="PRO_0000410676" description="Biogenesis of lysosome-related organelles complex 1 subunit KXD1">
    <location>
        <begin position="1"/>
        <end position="218"/>
    </location>
</feature>
<feature type="region of interest" description="Disordered" evidence="3">
    <location>
        <begin position="1"/>
        <end position="65"/>
    </location>
</feature>
<feature type="coiled-coil region" evidence="2">
    <location>
        <begin position="142"/>
        <end position="192"/>
    </location>
</feature>
<feature type="compositionally biased region" description="Polar residues" evidence="3">
    <location>
        <begin position="17"/>
        <end position="30"/>
    </location>
</feature>
<feature type="compositionally biased region" description="Low complexity" evidence="3">
    <location>
        <begin position="39"/>
        <end position="65"/>
    </location>
</feature>
<proteinExistence type="inferred from homology"/>
<accession>E7KNF7</accession>
<reference key="1">
    <citation type="journal article" date="2011" name="PLoS Genet.">
        <title>Whole-genome comparison reveals novel genetic elements that characterize the genome of industrial strains of Saccharomyces cerevisiae.</title>
        <authorList>
            <person name="Borneman A.R."/>
            <person name="Desany B.A."/>
            <person name="Riches D."/>
            <person name="Affourtit J.P."/>
            <person name="Forgan A.H."/>
            <person name="Pretorius I.S."/>
            <person name="Egholm M."/>
            <person name="Chambers P.J."/>
        </authorList>
    </citation>
    <scope>NUCLEOTIDE SEQUENCE [LARGE SCALE GENOMIC DNA]</scope>
    <source>
        <strain>Lalvin QA23</strain>
    </source>
</reference>
<keyword id="KW-0175">Coiled coil</keyword>
<keyword id="KW-0967">Endosome</keyword>
<keyword id="KW-0813">Transport</keyword>
<comment type="function">
    <text evidence="1">Component of the biogenesis of lysosome-related organelles complex-1 (BLOC-1) involved in endosomal cargo sorting.</text>
</comment>
<comment type="subunit">
    <text evidence="1">Component of the biogenesis of lysosome-related organelles complex-1 (BLOC-1) composed of at least BLI1, BLS1, CNL1, KXD1, SNN1 and VAB2.</text>
</comment>
<comment type="subcellular location">
    <subcellularLocation>
        <location evidence="1">Endosome</location>
    </subcellularLocation>
</comment>
<comment type="similarity">
    <text evidence="4">Belongs to the KXD1 family.</text>
</comment>
<evidence type="ECO:0000250" key="1"/>
<evidence type="ECO:0000255" key="2"/>
<evidence type="ECO:0000256" key="3">
    <source>
        <dbReference type="SAM" id="MobiDB-lite"/>
    </source>
</evidence>
<evidence type="ECO:0000305" key="4"/>
<sequence length="218" mass="24442">MVTGISEENDDEETFSAVHSSTPSINSQSYAIPITEEMSSSFHDSISTTSNSSGSFDSDGSNVSDVVEQNEMDNESNVDEDLFLDNDIPQSSNLLPTDAQDPGPIFDVSRYIFDSLKQSIDSADFSEALSLQTKTSAVINSKSLELKQYIDEMKSRLTQLQEKFENGEATSKKIKRDLETSRKNIDYLNAALRVDFPIEFNQAREKILERRLNEDHDC</sequence>
<protein>
    <recommendedName>
        <fullName>Biogenesis of lysosome-related organelles complex 1 subunit KXD1</fullName>
        <shortName>BLOC-1 subunit KXD1</shortName>
    </recommendedName>
    <alternativeName>
        <fullName>KxDL homolog</fullName>
    </alternativeName>
</protein>
<name>KXD1_YEASL</name>
<dbReference type="EMBL" id="ADVV01000035">
    <property type="protein sequence ID" value="EGA82902.1"/>
    <property type="molecule type" value="Genomic_DNA"/>
</dbReference>
<dbReference type="SMR" id="E7KNF7"/>
<dbReference type="HOGENOM" id="CLU_099155_0_0_1"/>
<dbReference type="GO" id="GO:0031083">
    <property type="term" value="C:BLOC-1 complex"/>
    <property type="evidence" value="ECO:0007669"/>
    <property type="project" value="TreeGrafter"/>
</dbReference>
<dbReference type="GO" id="GO:0005768">
    <property type="term" value="C:endosome"/>
    <property type="evidence" value="ECO:0007669"/>
    <property type="project" value="UniProtKB-SubCell"/>
</dbReference>
<dbReference type="GO" id="GO:0007032">
    <property type="term" value="P:endosome organization"/>
    <property type="evidence" value="ECO:0007669"/>
    <property type="project" value="TreeGrafter"/>
</dbReference>
<dbReference type="GO" id="GO:0032880">
    <property type="term" value="P:regulation of protein localization"/>
    <property type="evidence" value="ECO:0007669"/>
    <property type="project" value="TreeGrafter"/>
</dbReference>
<dbReference type="InterPro" id="IPR051390">
    <property type="entry name" value="BLOC-1_subunit_KXD1"/>
</dbReference>
<dbReference type="InterPro" id="IPR019371">
    <property type="entry name" value="KxDL_dom"/>
</dbReference>
<dbReference type="PANTHER" id="PTHR37787">
    <property type="entry name" value="BIOGENESIS OF LYSOSOME-RELATED ORGANELLES COMPLEX 1 SUBUNIT KXD1"/>
    <property type="match status" value="1"/>
</dbReference>
<dbReference type="PANTHER" id="PTHR37787:SF1">
    <property type="entry name" value="BIOGENESIS OF LYSOSOME-RELATED ORGANELLES COMPLEX 1 SUBUNIT KXD1"/>
    <property type="match status" value="1"/>
</dbReference>
<dbReference type="Pfam" id="PF10241">
    <property type="entry name" value="KxDL"/>
    <property type="match status" value="1"/>
</dbReference>
<gene>
    <name type="primary">KXD1</name>
    <name type="ORF">QA23_1711</name>
</gene>